<comment type="function">
    <text evidence="1">Required for pre-mRNA splicing as component of the spliceosome (By similarity). Core component of the splicing-dependent multiprotein exon junction complex (EJC) deposited at splice junctions on mRNAs. The EJC is a dynamic structure consisting of core proteins and several peripheral nuclear and cytoplasmic associated factors that join the complex only transiently either during EJC assembly or during subsequent mRNA metabolism. The EJC marks the position of the exon-exon junction in the mature mRNA for the gene expression machinery and the core components remain bound to spliced mRNAs throughout all stages of mRNA metabolism thereby influencing downstream processes including nuclear mRNA export, subcellular mRNA localization, translation efficiency and nonsense-mediated mRNA decay (NMD). Its removal from cytoplasmic mRNAs requires translation initiation from EJC-bearing spliced mRNAs. Associates preferentially with mRNAs produced by splicing. Does not interact with pre-mRNAs, introns, or mRNAs produced from intronless cDNAs. Associates with both nuclear mRNAs and newly exported cytoplasmic mRNAs (By similarity).</text>
</comment>
<comment type="subunit">
    <text evidence="1">Part of the mRNA splicing-dependent exon junction complex (EJC) complex; the core complex contains casc3, eif4a3, magoh, and rbm8a. Identified in the spliceosome C complex. Associates with polysomes.</text>
</comment>
<comment type="subcellular location">
    <subcellularLocation>
        <location evidence="1">Nucleus</location>
    </subcellularLocation>
    <subcellularLocation>
        <location evidence="1">Nucleus speckle</location>
    </subcellularLocation>
    <subcellularLocation>
        <location evidence="1">Cytoplasm</location>
    </subcellularLocation>
    <text evidence="1">Nucleocytoplasmic shuttling protein. Travels to the cytoplasm as part of the exon junction complex (EJC) bound to mRNA.</text>
</comment>
<comment type="similarity">
    <text evidence="4">Belongs to the RBM8A family.</text>
</comment>
<gene>
    <name type="primary">rbm8a</name>
    <name type="synonym">rbm8</name>
    <name type="ORF">TEgg086g17.1</name>
</gene>
<dbReference type="EMBL" id="CR942553">
    <property type="protein sequence ID" value="CAJ83674.1"/>
    <property type="molecule type" value="mRNA"/>
</dbReference>
<dbReference type="EMBL" id="BC157757">
    <property type="protein sequence ID" value="AAI57758.1"/>
    <property type="molecule type" value="mRNA"/>
</dbReference>
<dbReference type="RefSeq" id="NP_001039147.1">
    <property type="nucleotide sequence ID" value="NM_001045682.1"/>
</dbReference>
<dbReference type="SMR" id="Q28BZ1"/>
<dbReference type="FunCoup" id="Q28BZ1">
    <property type="interactions" value="4251"/>
</dbReference>
<dbReference type="GeneID" id="733972"/>
<dbReference type="KEGG" id="xtr:733972"/>
<dbReference type="CTD" id="9939"/>
<dbReference type="Xenbase" id="XB-GENE-6250837">
    <property type="gene designation" value="rbm8a"/>
</dbReference>
<dbReference type="InParanoid" id="Q28BZ1"/>
<dbReference type="OMA" id="IYNHEEF"/>
<dbReference type="OrthoDB" id="15688at2759"/>
<dbReference type="Reactome" id="R-XTR-72163">
    <property type="pathway name" value="mRNA Splicing - Major Pathway"/>
</dbReference>
<dbReference type="Reactome" id="R-XTR-975957">
    <property type="pathway name" value="Nonsense Mediated Decay (NMD) enhanced by the Exon Junction Complex (EJC)"/>
</dbReference>
<dbReference type="Proteomes" id="UP000008143">
    <property type="component" value="Chromosome 8"/>
</dbReference>
<dbReference type="GO" id="GO:0005737">
    <property type="term" value="C:cytoplasm"/>
    <property type="evidence" value="ECO:0007669"/>
    <property type="project" value="UniProtKB-SubCell"/>
</dbReference>
<dbReference type="GO" id="GO:0016607">
    <property type="term" value="C:nuclear speck"/>
    <property type="evidence" value="ECO:0007669"/>
    <property type="project" value="UniProtKB-SubCell"/>
</dbReference>
<dbReference type="GO" id="GO:0005634">
    <property type="term" value="C:nucleus"/>
    <property type="evidence" value="ECO:0000250"/>
    <property type="project" value="UniProtKB"/>
</dbReference>
<dbReference type="GO" id="GO:0071006">
    <property type="term" value="C:U2-type catalytic step 1 spliceosome"/>
    <property type="evidence" value="ECO:0000250"/>
    <property type="project" value="UniProtKB"/>
</dbReference>
<dbReference type="GO" id="GO:0003729">
    <property type="term" value="F:mRNA binding"/>
    <property type="evidence" value="ECO:0007669"/>
    <property type="project" value="InterPro"/>
</dbReference>
<dbReference type="GO" id="GO:0000398">
    <property type="term" value="P:mRNA splicing, via spliceosome"/>
    <property type="evidence" value="ECO:0000250"/>
    <property type="project" value="UniProtKB"/>
</dbReference>
<dbReference type="GO" id="GO:0051028">
    <property type="term" value="P:mRNA transport"/>
    <property type="evidence" value="ECO:0007669"/>
    <property type="project" value="UniProtKB-KW"/>
</dbReference>
<dbReference type="GO" id="GO:0000184">
    <property type="term" value="P:nuclear-transcribed mRNA catabolic process, nonsense-mediated decay"/>
    <property type="evidence" value="ECO:0007669"/>
    <property type="project" value="UniProtKB-KW"/>
</dbReference>
<dbReference type="GO" id="GO:0000381">
    <property type="term" value="P:regulation of alternative mRNA splicing, via spliceosome"/>
    <property type="evidence" value="ECO:0000250"/>
    <property type="project" value="UniProtKB"/>
</dbReference>
<dbReference type="GO" id="GO:0006417">
    <property type="term" value="P:regulation of translation"/>
    <property type="evidence" value="ECO:0007669"/>
    <property type="project" value="UniProtKB-KW"/>
</dbReference>
<dbReference type="CDD" id="cd12324">
    <property type="entry name" value="RRM_RBM8"/>
    <property type="match status" value="1"/>
</dbReference>
<dbReference type="FunFam" id="3.30.70.330:FF:000157">
    <property type="entry name" value="RNA-binding protein 8A"/>
    <property type="match status" value="1"/>
</dbReference>
<dbReference type="Gene3D" id="3.30.70.330">
    <property type="match status" value="1"/>
</dbReference>
<dbReference type="InterPro" id="IPR012677">
    <property type="entry name" value="Nucleotide-bd_a/b_plait_sf"/>
</dbReference>
<dbReference type="InterPro" id="IPR035979">
    <property type="entry name" value="RBD_domain_sf"/>
</dbReference>
<dbReference type="InterPro" id="IPR008111">
    <property type="entry name" value="RNA-bd_8"/>
</dbReference>
<dbReference type="InterPro" id="IPR000504">
    <property type="entry name" value="RRM_dom"/>
</dbReference>
<dbReference type="InterPro" id="IPR033744">
    <property type="entry name" value="RRM_RBM8"/>
</dbReference>
<dbReference type="PANTHER" id="PTHR45894">
    <property type="entry name" value="RNA-BINDING PROTEIN 8A"/>
    <property type="match status" value="1"/>
</dbReference>
<dbReference type="Pfam" id="PF00076">
    <property type="entry name" value="RRM_1"/>
    <property type="match status" value="1"/>
</dbReference>
<dbReference type="PRINTS" id="PR01738">
    <property type="entry name" value="RNABINDINGM8"/>
</dbReference>
<dbReference type="SMART" id="SM00360">
    <property type="entry name" value="RRM"/>
    <property type="match status" value="1"/>
</dbReference>
<dbReference type="SUPFAM" id="SSF54928">
    <property type="entry name" value="RNA-binding domain, RBD"/>
    <property type="match status" value="1"/>
</dbReference>
<dbReference type="PROSITE" id="PS50102">
    <property type="entry name" value="RRM"/>
    <property type="match status" value="1"/>
</dbReference>
<reference key="1">
    <citation type="submission" date="2006-10" db="EMBL/GenBank/DDBJ databases">
        <authorList>
            <consortium name="Sanger Xenopus tropicalis EST/cDNA project"/>
        </authorList>
    </citation>
    <scope>NUCLEOTIDE SEQUENCE [LARGE SCALE MRNA]</scope>
    <source>
        <tissue>Egg</tissue>
    </source>
</reference>
<reference key="2">
    <citation type="submission" date="2007-12" db="EMBL/GenBank/DDBJ databases">
        <authorList>
            <consortium name="NIH - Xenopus Gene Collection (XGC) project"/>
        </authorList>
    </citation>
    <scope>NUCLEOTIDE SEQUENCE [LARGE SCALE MRNA]</scope>
    <source>
        <tissue>Brain</tissue>
    </source>
</reference>
<evidence type="ECO:0000250" key="1">
    <source>
        <dbReference type="UniProtKB" id="Q9Y5S9"/>
    </source>
</evidence>
<evidence type="ECO:0000255" key="2">
    <source>
        <dbReference type="PROSITE-ProRule" id="PRU00176"/>
    </source>
</evidence>
<evidence type="ECO:0000256" key="3">
    <source>
        <dbReference type="SAM" id="MobiDB-lite"/>
    </source>
</evidence>
<evidence type="ECO:0000305" key="4"/>
<keyword id="KW-0963">Cytoplasm</keyword>
<keyword id="KW-0507">mRNA processing</keyword>
<keyword id="KW-0508">mRNA splicing</keyword>
<keyword id="KW-0509">mRNA transport</keyword>
<keyword id="KW-0866">Nonsense-mediated mRNA decay</keyword>
<keyword id="KW-0539">Nucleus</keyword>
<keyword id="KW-1185">Reference proteome</keyword>
<keyword id="KW-0694">RNA-binding</keyword>
<keyword id="KW-0747">Spliceosome</keyword>
<keyword id="KW-0810">Translation regulation</keyword>
<keyword id="KW-0813">Transport</keyword>
<proteinExistence type="evidence at transcript level"/>
<protein>
    <recommendedName>
        <fullName>RNA-binding protein 8A</fullName>
    </recommendedName>
    <alternativeName>
        <fullName>RNA-binding motif protein 8A</fullName>
    </alternativeName>
    <alternativeName>
        <fullName>Ribonucleoprotein RBM8A</fullName>
    </alternativeName>
</protein>
<name>RBM8A_XENTR</name>
<feature type="chain" id="PRO_0000378568" description="RNA-binding protein 8A">
    <location>
        <begin position="1"/>
        <end position="174"/>
    </location>
</feature>
<feature type="domain" description="RRM" evidence="2">
    <location>
        <begin position="73"/>
        <end position="151"/>
    </location>
</feature>
<feature type="region of interest" description="Disordered" evidence="3">
    <location>
        <begin position="1"/>
        <end position="70"/>
    </location>
</feature>
<feature type="region of interest" description="Disordered" evidence="3">
    <location>
        <begin position="147"/>
        <end position="174"/>
    </location>
</feature>
<feature type="compositionally biased region" description="Basic and acidic residues" evidence="3">
    <location>
        <begin position="1"/>
        <end position="11"/>
    </location>
</feature>
<feature type="compositionally biased region" description="Basic residues" evidence="3">
    <location>
        <begin position="28"/>
        <end position="38"/>
    </location>
</feature>
<feature type="compositionally biased region" description="Basic and acidic residues" evidence="3">
    <location>
        <begin position="44"/>
        <end position="54"/>
    </location>
</feature>
<feature type="compositionally biased region" description="Basic residues" evidence="3">
    <location>
        <begin position="155"/>
        <end position="174"/>
    </location>
</feature>
<organism>
    <name type="scientific">Xenopus tropicalis</name>
    <name type="common">Western clawed frog</name>
    <name type="synonym">Silurana tropicalis</name>
    <dbReference type="NCBI Taxonomy" id="8364"/>
    <lineage>
        <taxon>Eukaryota</taxon>
        <taxon>Metazoa</taxon>
        <taxon>Chordata</taxon>
        <taxon>Craniata</taxon>
        <taxon>Vertebrata</taxon>
        <taxon>Euteleostomi</taxon>
        <taxon>Amphibia</taxon>
        <taxon>Batrachia</taxon>
        <taxon>Anura</taxon>
        <taxon>Pipoidea</taxon>
        <taxon>Pipidae</taxon>
        <taxon>Xenopodinae</taxon>
        <taxon>Xenopus</taxon>
        <taxon>Silurana</taxon>
    </lineage>
</organism>
<sequence length="174" mass="19762">MADVLDLHEAGGEDFAMDEDGDESIHKLKEKAKKRKGRGFGADEGTRARIREDYDSVEQDGDEPGPQRSVEGWILFVTGVHEEATEEDIHDKFGEFGEIKNIHLNLDRRTGFLKGYALVEYETYKEALAAMEGLNGQDLMGQPISVDWGFVRGPPKGKRRSGRRRSRSPERRRR</sequence>
<accession>Q28BZ1</accession>